<organism>
    <name type="scientific">Cereibacter sphaeroides (strain ATCC 17029 / ATH 2.4.9)</name>
    <name type="common">Rhodobacter sphaeroides</name>
    <dbReference type="NCBI Taxonomy" id="349101"/>
    <lineage>
        <taxon>Bacteria</taxon>
        <taxon>Pseudomonadati</taxon>
        <taxon>Pseudomonadota</taxon>
        <taxon>Alphaproteobacteria</taxon>
        <taxon>Rhodobacterales</taxon>
        <taxon>Paracoccaceae</taxon>
        <taxon>Cereibacter</taxon>
    </lineage>
</organism>
<sequence length="26" mass="3091">MAWKTPRYDETPVGMEINMYACAKRK</sequence>
<keyword id="KW-0884">PQQ biosynthesis</keyword>
<reference key="1">
    <citation type="submission" date="2007-02" db="EMBL/GenBank/DDBJ databases">
        <title>Complete sequence of chromosome 1 of Rhodobacter sphaeroides ATCC 17029.</title>
        <authorList>
            <person name="Copeland A."/>
            <person name="Lucas S."/>
            <person name="Lapidus A."/>
            <person name="Barry K."/>
            <person name="Detter J.C."/>
            <person name="Glavina del Rio T."/>
            <person name="Hammon N."/>
            <person name="Israni S."/>
            <person name="Dalin E."/>
            <person name="Tice H."/>
            <person name="Pitluck S."/>
            <person name="Kiss H."/>
            <person name="Brettin T."/>
            <person name="Bruce D."/>
            <person name="Han C."/>
            <person name="Tapia R."/>
            <person name="Gilna P."/>
            <person name="Schmutz J."/>
            <person name="Larimer F."/>
            <person name="Land M."/>
            <person name="Hauser L."/>
            <person name="Kyrpides N."/>
            <person name="Mikhailova N."/>
            <person name="Richardson P."/>
            <person name="Mackenzie C."/>
            <person name="Choudhary M."/>
            <person name="Donohue T.J."/>
            <person name="Kaplan S."/>
        </authorList>
    </citation>
    <scope>NUCLEOTIDE SEQUENCE [LARGE SCALE GENOMIC DNA]</scope>
    <source>
        <strain>ATCC 17029 / ATH 2.4.9</strain>
    </source>
</reference>
<feature type="chain" id="PRO_1000061704" description="Coenzyme PQQ synthesis protein A">
    <location>
        <begin position="1"/>
        <end position="26"/>
    </location>
</feature>
<feature type="cross-link" description="Pyrroloquinoline quinone (Glu-Tyr)" evidence="1">
    <location>
        <begin position="16"/>
        <end position="20"/>
    </location>
</feature>
<evidence type="ECO:0000255" key="1">
    <source>
        <dbReference type="HAMAP-Rule" id="MF_00656"/>
    </source>
</evidence>
<accession>A3PMI6</accession>
<protein>
    <recommendedName>
        <fullName evidence="1">Coenzyme PQQ synthesis protein A</fullName>
    </recommendedName>
    <alternativeName>
        <fullName evidence="1">Pyrroloquinoline quinone biosynthesis protein A</fullName>
    </alternativeName>
</protein>
<dbReference type="EMBL" id="CP000577">
    <property type="protein sequence ID" value="ABN77552.1"/>
    <property type="molecule type" value="Genomic_DNA"/>
</dbReference>
<dbReference type="RefSeq" id="WP_011841675.1">
    <property type="nucleotide sequence ID" value="NC_009049.1"/>
</dbReference>
<dbReference type="KEGG" id="rsh:Rsph17029_2450"/>
<dbReference type="HOGENOM" id="CLU_219399_2_0_5"/>
<dbReference type="UniPathway" id="UPA00539"/>
<dbReference type="GO" id="GO:0018189">
    <property type="term" value="P:pyrroloquinoline quinone biosynthetic process"/>
    <property type="evidence" value="ECO:0007669"/>
    <property type="project" value="UniProtKB-UniRule"/>
</dbReference>
<dbReference type="HAMAP" id="MF_00656">
    <property type="entry name" value="PQQ_syn_PqqA"/>
    <property type="match status" value="1"/>
</dbReference>
<dbReference type="InterPro" id="IPR011725">
    <property type="entry name" value="PQQ_synth_PqqA"/>
</dbReference>
<dbReference type="NCBIfam" id="TIGR02107">
    <property type="entry name" value="PQQ_syn_pqqA"/>
    <property type="match status" value="1"/>
</dbReference>
<dbReference type="Pfam" id="PF08042">
    <property type="entry name" value="PqqA"/>
    <property type="match status" value="1"/>
</dbReference>
<proteinExistence type="inferred from homology"/>
<gene>
    <name evidence="1" type="primary">pqqA</name>
    <name type="ordered locus">Rsph17029_2450</name>
</gene>
<name>PQQA_CERS1</name>
<comment type="function">
    <text evidence="1">Required for coenzyme pyrroloquinoline quinone (PQQ) biosynthesis. PQQ is probably formed by cross-linking a specific glutamate to a specific tyrosine residue and excising these residues from the peptide.</text>
</comment>
<comment type="pathway">
    <text evidence="1">Cofactor biosynthesis; pyrroloquinoline quinone biosynthesis.</text>
</comment>
<comment type="similarity">
    <text evidence="1">Belongs to the PqqA family.</text>
</comment>